<evidence type="ECO:0000255" key="1">
    <source>
        <dbReference type="HAMAP-Rule" id="MF_00333"/>
    </source>
</evidence>
<organism>
    <name type="scientific">Pseudomonas savastanoi pv. phaseolicola (strain 1448A / Race 6)</name>
    <name type="common">Pseudomonas syringae pv. phaseolicola (strain 1448A / Race 6)</name>
    <dbReference type="NCBI Taxonomy" id="264730"/>
    <lineage>
        <taxon>Bacteria</taxon>
        <taxon>Pseudomonadati</taxon>
        <taxon>Pseudomonadota</taxon>
        <taxon>Gammaproteobacteria</taxon>
        <taxon>Pseudomonadales</taxon>
        <taxon>Pseudomonadaceae</taxon>
        <taxon>Pseudomonas</taxon>
    </lineage>
</organism>
<comment type="function">
    <text evidence="1">Involved in the heme biosynthesis. Catalyzes the aerobic oxidative decarboxylation of propionate groups of rings A and B of coproporphyrinogen-III to yield the vinyl groups in protoporphyrinogen-IX.</text>
</comment>
<comment type="catalytic activity">
    <reaction evidence="1">
        <text>coproporphyrinogen III + O2 + 2 H(+) = protoporphyrinogen IX + 2 CO2 + 2 H2O</text>
        <dbReference type="Rhea" id="RHEA:18257"/>
        <dbReference type="ChEBI" id="CHEBI:15377"/>
        <dbReference type="ChEBI" id="CHEBI:15378"/>
        <dbReference type="ChEBI" id="CHEBI:15379"/>
        <dbReference type="ChEBI" id="CHEBI:16526"/>
        <dbReference type="ChEBI" id="CHEBI:57307"/>
        <dbReference type="ChEBI" id="CHEBI:57309"/>
        <dbReference type="EC" id="1.3.3.3"/>
    </reaction>
</comment>
<comment type="cofactor">
    <cofactor evidence="1">
        <name>a divalent metal cation</name>
        <dbReference type="ChEBI" id="CHEBI:60240"/>
    </cofactor>
</comment>
<comment type="pathway">
    <text evidence="1">Porphyrin-containing compound metabolism; protoporphyrin-IX biosynthesis; protoporphyrinogen-IX from coproporphyrinogen-III (O2 route): step 1/1.</text>
</comment>
<comment type="subunit">
    <text evidence="1">Homodimer.</text>
</comment>
<comment type="subcellular location">
    <subcellularLocation>
        <location evidence="1">Cytoplasm</location>
    </subcellularLocation>
</comment>
<comment type="similarity">
    <text evidence="1">Belongs to the aerobic coproporphyrinogen-III oxidase family.</text>
</comment>
<feature type="chain" id="PRO_1000019482" description="Oxygen-dependent coproporphyrinogen-III oxidase">
    <location>
        <begin position="1"/>
        <end position="304"/>
    </location>
</feature>
<feature type="region of interest" description="Important for dimerization" evidence="1">
    <location>
        <begin position="241"/>
        <end position="276"/>
    </location>
</feature>
<feature type="active site" description="Proton donor" evidence="1">
    <location>
        <position position="107"/>
    </location>
</feature>
<feature type="binding site" evidence="1">
    <location>
        <position position="93"/>
    </location>
    <ligand>
        <name>substrate</name>
    </ligand>
</feature>
<feature type="binding site" evidence="1">
    <location>
        <position position="97"/>
    </location>
    <ligand>
        <name>a divalent metal cation</name>
        <dbReference type="ChEBI" id="CHEBI:60240"/>
    </ligand>
</feature>
<feature type="binding site" evidence="1">
    <location>
        <position position="107"/>
    </location>
    <ligand>
        <name>a divalent metal cation</name>
        <dbReference type="ChEBI" id="CHEBI:60240"/>
    </ligand>
</feature>
<feature type="binding site" evidence="1">
    <location>
        <begin position="109"/>
        <end position="111"/>
    </location>
    <ligand>
        <name>substrate</name>
    </ligand>
</feature>
<feature type="binding site" evidence="1">
    <location>
        <position position="146"/>
    </location>
    <ligand>
        <name>a divalent metal cation</name>
        <dbReference type="ChEBI" id="CHEBI:60240"/>
    </ligand>
</feature>
<feature type="binding site" evidence="1">
    <location>
        <position position="176"/>
    </location>
    <ligand>
        <name>a divalent metal cation</name>
        <dbReference type="ChEBI" id="CHEBI:60240"/>
    </ligand>
</feature>
<feature type="binding site" evidence="1">
    <location>
        <begin position="259"/>
        <end position="261"/>
    </location>
    <ligand>
        <name>substrate</name>
    </ligand>
</feature>
<feature type="site" description="Important for dimerization" evidence="1">
    <location>
        <position position="176"/>
    </location>
</feature>
<gene>
    <name evidence="1" type="primary">hemF</name>
    <name type="ordered locus">PSPPH_0026</name>
</gene>
<proteinExistence type="inferred from homology"/>
<reference key="1">
    <citation type="journal article" date="2005" name="J. Bacteriol.">
        <title>Whole-genome sequence analysis of Pseudomonas syringae pv. phaseolicola 1448A reveals divergence among pathovars in genes involved in virulence and transposition.</title>
        <authorList>
            <person name="Joardar V."/>
            <person name="Lindeberg M."/>
            <person name="Jackson R.W."/>
            <person name="Selengut J."/>
            <person name="Dodson R."/>
            <person name="Brinkac L.M."/>
            <person name="Daugherty S.C."/>
            <person name="DeBoy R.T."/>
            <person name="Durkin A.S."/>
            <person name="Gwinn Giglio M."/>
            <person name="Madupu R."/>
            <person name="Nelson W.C."/>
            <person name="Rosovitz M.J."/>
            <person name="Sullivan S.A."/>
            <person name="Crabtree J."/>
            <person name="Creasy T."/>
            <person name="Davidsen T.M."/>
            <person name="Haft D.H."/>
            <person name="Zafar N."/>
            <person name="Zhou L."/>
            <person name="Halpin R."/>
            <person name="Holley T."/>
            <person name="Khouri H.M."/>
            <person name="Feldblyum T.V."/>
            <person name="White O."/>
            <person name="Fraser C.M."/>
            <person name="Chatterjee A.K."/>
            <person name="Cartinhour S."/>
            <person name="Schneider D."/>
            <person name="Mansfield J.W."/>
            <person name="Collmer A."/>
            <person name="Buell R."/>
        </authorList>
    </citation>
    <scope>NUCLEOTIDE SEQUENCE [LARGE SCALE GENOMIC DNA]</scope>
    <source>
        <strain>1448A / Race 6</strain>
    </source>
</reference>
<accession>Q48QH6</accession>
<name>HEM6_PSE14</name>
<protein>
    <recommendedName>
        <fullName evidence="1">Oxygen-dependent coproporphyrinogen-III oxidase</fullName>
        <shortName evidence="1">CPO</shortName>
        <shortName evidence="1">Coprogen oxidase</shortName>
        <shortName evidence="1">Coproporphyrinogenase</shortName>
        <ecNumber evidence="1">1.3.3.3</ecNumber>
    </recommendedName>
</protein>
<sequence length="304" mass="34528">MSTRTEAVKAYLLDLQDRICTALEQEDGNAHFVEDAWTRPAGGGGRTRVIENGAVIEKGGVNFSHVFGSNLPPSASAHRPELAGRGFEALGVSLVIHPHNPHVPTSHANVRFFIAEKEGEEPVWWFGGGFDLTPYYGVEEDCVHWHRVAERACAPFGDDVYPRYKAWCDSYFHLKHRDEPRGIGGLFFDDVNQWDFDTSFAFIRAIGDAFINAYLPIVRRRKAAAYTAQQREFQEFRRGRYVEFNLVYDRGTLFGLQSGGRTESILMSLPPQVRWGYDWKAAPGSEEARLTEYFLTDRDWLADN</sequence>
<dbReference type="EC" id="1.3.3.3" evidence="1"/>
<dbReference type="EMBL" id="CP000058">
    <property type="protein sequence ID" value="AAZ34851.1"/>
    <property type="molecule type" value="Genomic_DNA"/>
</dbReference>
<dbReference type="RefSeq" id="WP_011167291.1">
    <property type="nucleotide sequence ID" value="NC_005773.3"/>
</dbReference>
<dbReference type="SMR" id="Q48QH6"/>
<dbReference type="KEGG" id="psp:PSPPH_0026"/>
<dbReference type="eggNOG" id="COG0408">
    <property type="taxonomic scope" value="Bacteria"/>
</dbReference>
<dbReference type="HOGENOM" id="CLU_026169_0_1_6"/>
<dbReference type="UniPathway" id="UPA00251">
    <property type="reaction ID" value="UER00322"/>
</dbReference>
<dbReference type="Proteomes" id="UP000000551">
    <property type="component" value="Chromosome"/>
</dbReference>
<dbReference type="GO" id="GO:0005737">
    <property type="term" value="C:cytoplasm"/>
    <property type="evidence" value="ECO:0007669"/>
    <property type="project" value="UniProtKB-SubCell"/>
</dbReference>
<dbReference type="GO" id="GO:0004109">
    <property type="term" value="F:coproporphyrinogen oxidase activity"/>
    <property type="evidence" value="ECO:0007669"/>
    <property type="project" value="UniProtKB-UniRule"/>
</dbReference>
<dbReference type="GO" id="GO:0046872">
    <property type="term" value="F:metal ion binding"/>
    <property type="evidence" value="ECO:0007669"/>
    <property type="project" value="UniProtKB-KW"/>
</dbReference>
<dbReference type="GO" id="GO:0042803">
    <property type="term" value="F:protein homodimerization activity"/>
    <property type="evidence" value="ECO:0000250"/>
    <property type="project" value="UniProtKB"/>
</dbReference>
<dbReference type="GO" id="GO:0006782">
    <property type="term" value="P:protoporphyrinogen IX biosynthetic process"/>
    <property type="evidence" value="ECO:0007669"/>
    <property type="project" value="UniProtKB-UniRule"/>
</dbReference>
<dbReference type="FunFam" id="3.40.1500.10:FF:000001">
    <property type="entry name" value="Oxygen-dependent coproporphyrinogen-III oxidase"/>
    <property type="match status" value="1"/>
</dbReference>
<dbReference type="Gene3D" id="3.40.1500.10">
    <property type="entry name" value="Coproporphyrinogen III oxidase, aerobic"/>
    <property type="match status" value="1"/>
</dbReference>
<dbReference type="HAMAP" id="MF_00333">
    <property type="entry name" value="Coprogen_oxidas"/>
    <property type="match status" value="1"/>
</dbReference>
<dbReference type="InterPro" id="IPR001260">
    <property type="entry name" value="Coprogen_oxidase_aer"/>
</dbReference>
<dbReference type="InterPro" id="IPR036406">
    <property type="entry name" value="Coprogen_oxidase_aer_sf"/>
</dbReference>
<dbReference type="InterPro" id="IPR018375">
    <property type="entry name" value="Coprogen_oxidase_CS"/>
</dbReference>
<dbReference type="NCBIfam" id="NF003727">
    <property type="entry name" value="PRK05330.1"/>
    <property type="match status" value="1"/>
</dbReference>
<dbReference type="PANTHER" id="PTHR10755">
    <property type="entry name" value="COPROPORPHYRINOGEN III OXIDASE, MITOCHONDRIAL"/>
    <property type="match status" value="1"/>
</dbReference>
<dbReference type="PANTHER" id="PTHR10755:SF0">
    <property type="entry name" value="OXYGEN-DEPENDENT COPROPORPHYRINOGEN-III OXIDASE, MITOCHONDRIAL"/>
    <property type="match status" value="1"/>
</dbReference>
<dbReference type="Pfam" id="PF01218">
    <property type="entry name" value="Coprogen_oxidas"/>
    <property type="match status" value="1"/>
</dbReference>
<dbReference type="PIRSF" id="PIRSF000166">
    <property type="entry name" value="Coproporphyri_ox"/>
    <property type="match status" value="1"/>
</dbReference>
<dbReference type="PRINTS" id="PR00073">
    <property type="entry name" value="COPRGNOXDASE"/>
</dbReference>
<dbReference type="SUPFAM" id="SSF102886">
    <property type="entry name" value="Coproporphyrinogen III oxidase"/>
    <property type="match status" value="1"/>
</dbReference>
<dbReference type="PROSITE" id="PS01021">
    <property type="entry name" value="COPROGEN_OXIDASE"/>
    <property type="match status" value="1"/>
</dbReference>
<keyword id="KW-0963">Cytoplasm</keyword>
<keyword id="KW-0350">Heme biosynthesis</keyword>
<keyword id="KW-0479">Metal-binding</keyword>
<keyword id="KW-0560">Oxidoreductase</keyword>
<keyword id="KW-0627">Porphyrin biosynthesis</keyword>